<dbReference type="EC" id="7.6.2.5" evidence="1"/>
<dbReference type="EMBL" id="CP000087">
    <property type="protein sequence ID" value="ABE04170.1"/>
    <property type="molecule type" value="Genomic_DNA"/>
</dbReference>
<dbReference type="RefSeq" id="WP_011476785.1">
    <property type="nucleotide sequence ID" value="NC_007940.1"/>
</dbReference>
<dbReference type="SMR" id="Q1RKE4"/>
<dbReference type="KEGG" id="rbe:RBE_0089"/>
<dbReference type="eggNOG" id="COG4133">
    <property type="taxonomic scope" value="Bacteria"/>
</dbReference>
<dbReference type="HOGENOM" id="CLU_000604_1_2_5"/>
<dbReference type="OrthoDB" id="9800654at2"/>
<dbReference type="Proteomes" id="UP000001951">
    <property type="component" value="Chromosome"/>
</dbReference>
<dbReference type="GO" id="GO:0005886">
    <property type="term" value="C:plasma membrane"/>
    <property type="evidence" value="ECO:0007669"/>
    <property type="project" value="UniProtKB-SubCell"/>
</dbReference>
<dbReference type="GO" id="GO:0015439">
    <property type="term" value="F:ABC-type heme transporter activity"/>
    <property type="evidence" value="ECO:0007669"/>
    <property type="project" value="UniProtKB-EC"/>
</dbReference>
<dbReference type="GO" id="GO:0005524">
    <property type="term" value="F:ATP binding"/>
    <property type="evidence" value="ECO:0007669"/>
    <property type="project" value="UniProtKB-KW"/>
</dbReference>
<dbReference type="GO" id="GO:0016887">
    <property type="term" value="F:ATP hydrolysis activity"/>
    <property type="evidence" value="ECO:0007669"/>
    <property type="project" value="InterPro"/>
</dbReference>
<dbReference type="GO" id="GO:0017004">
    <property type="term" value="P:cytochrome complex assembly"/>
    <property type="evidence" value="ECO:0007669"/>
    <property type="project" value="UniProtKB-KW"/>
</dbReference>
<dbReference type="Gene3D" id="3.40.50.300">
    <property type="entry name" value="P-loop containing nucleotide triphosphate hydrolases"/>
    <property type="match status" value="1"/>
</dbReference>
<dbReference type="InterPro" id="IPR003593">
    <property type="entry name" value="AAA+_ATPase"/>
</dbReference>
<dbReference type="InterPro" id="IPR003439">
    <property type="entry name" value="ABC_transporter-like_ATP-bd"/>
</dbReference>
<dbReference type="InterPro" id="IPR005895">
    <property type="entry name" value="ABC_transptr_haem_export_CcmA"/>
</dbReference>
<dbReference type="InterPro" id="IPR027417">
    <property type="entry name" value="P-loop_NTPase"/>
</dbReference>
<dbReference type="NCBIfam" id="TIGR01189">
    <property type="entry name" value="ccmA"/>
    <property type="match status" value="1"/>
</dbReference>
<dbReference type="NCBIfam" id="NF010063">
    <property type="entry name" value="PRK13541.1"/>
    <property type="match status" value="1"/>
</dbReference>
<dbReference type="PANTHER" id="PTHR43499">
    <property type="entry name" value="ABC TRANSPORTER I FAMILY MEMBER 1"/>
    <property type="match status" value="1"/>
</dbReference>
<dbReference type="PANTHER" id="PTHR43499:SF1">
    <property type="entry name" value="ABC TRANSPORTER I FAMILY MEMBER 1"/>
    <property type="match status" value="1"/>
</dbReference>
<dbReference type="Pfam" id="PF00005">
    <property type="entry name" value="ABC_tran"/>
    <property type="match status" value="1"/>
</dbReference>
<dbReference type="SMART" id="SM00382">
    <property type="entry name" value="AAA"/>
    <property type="match status" value="1"/>
</dbReference>
<dbReference type="SUPFAM" id="SSF52540">
    <property type="entry name" value="P-loop containing nucleoside triphosphate hydrolases"/>
    <property type="match status" value="1"/>
</dbReference>
<dbReference type="PROSITE" id="PS50893">
    <property type="entry name" value="ABC_TRANSPORTER_2"/>
    <property type="match status" value="1"/>
</dbReference>
<dbReference type="PROSITE" id="PS51243">
    <property type="entry name" value="CCMA"/>
    <property type="match status" value="1"/>
</dbReference>
<feature type="chain" id="PRO_0000260190" description="Cytochrome c biogenesis ATP-binding export protein CcmA">
    <location>
        <begin position="1"/>
        <end position="196"/>
    </location>
</feature>
<feature type="domain" description="ABC transporter" evidence="1">
    <location>
        <begin position="2"/>
        <end position="195"/>
    </location>
</feature>
<feature type="binding site" evidence="1">
    <location>
        <begin position="34"/>
        <end position="41"/>
    </location>
    <ligand>
        <name>ATP</name>
        <dbReference type="ChEBI" id="CHEBI:30616"/>
    </ligand>
</feature>
<organism>
    <name type="scientific">Rickettsia bellii (strain RML369-C)</name>
    <dbReference type="NCBI Taxonomy" id="336407"/>
    <lineage>
        <taxon>Bacteria</taxon>
        <taxon>Pseudomonadati</taxon>
        <taxon>Pseudomonadota</taxon>
        <taxon>Alphaproteobacteria</taxon>
        <taxon>Rickettsiales</taxon>
        <taxon>Rickettsiaceae</taxon>
        <taxon>Rickettsieae</taxon>
        <taxon>Rickettsia</taxon>
        <taxon>belli group</taxon>
    </lineage>
</organism>
<evidence type="ECO:0000255" key="1">
    <source>
        <dbReference type="HAMAP-Rule" id="MF_01707"/>
    </source>
</evidence>
<protein>
    <recommendedName>
        <fullName evidence="1">Cytochrome c biogenesis ATP-binding export protein CcmA</fullName>
        <ecNumber evidence="1">7.6.2.5</ecNumber>
    </recommendedName>
    <alternativeName>
        <fullName evidence="1">Heme exporter protein A</fullName>
    </alternativeName>
</protein>
<keyword id="KW-0067">ATP-binding</keyword>
<keyword id="KW-0997">Cell inner membrane</keyword>
<keyword id="KW-1003">Cell membrane</keyword>
<keyword id="KW-0201">Cytochrome c-type biogenesis</keyword>
<keyword id="KW-0472">Membrane</keyword>
<keyword id="KW-0547">Nucleotide-binding</keyword>
<keyword id="KW-1278">Translocase</keyword>
<keyword id="KW-0813">Transport</keyword>
<comment type="function">
    <text evidence="1">Part of the ABC transporter complex CcmAB involved in the biogenesis of c-type cytochromes; once thought to export heme, this seems not to be the case, but its exact role is uncertain. Responsible for energy coupling to the transport system.</text>
</comment>
<comment type="catalytic activity">
    <reaction evidence="1">
        <text>heme b(in) + ATP + H2O = heme b(out) + ADP + phosphate + H(+)</text>
        <dbReference type="Rhea" id="RHEA:19261"/>
        <dbReference type="ChEBI" id="CHEBI:15377"/>
        <dbReference type="ChEBI" id="CHEBI:15378"/>
        <dbReference type="ChEBI" id="CHEBI:30616"/>
        <dbReference type="ChEBI" id="CHEBI:43474"/>
        <dbReference type="ChEBI" id="CHEBI:60344"/>
        <dbReference type="ChEBI" id="CHEBI:456216"/>
        <dbReference type="EC" id="7.6.2.5"/>
    </reaction>
</comment>
<comment type="subunit">
    <text evidence="1">The complex is composed of two ATP-binding proteins (CcmA) and two transmembrane proteins (CcmB).</text>
</comment>
<comment type="subcellular location">
    <subcellularLocation>
        <location evidence="1">Cell inner membrane</location>
        <topology evidence="1">Peripheral membrane protein</topology>
    </subcellularLocation>
</comment>
<comment type="similarity">
    <text evidence="1">Belongs to the ABC transporter superfamily. CcmA exporter (TC 3.A.1.107) family.</text>
</comment>
<gene>
    <name evidence="1" type="primary">ccmA</name>
    <name type="ordered locus">RBE_0089</name>
</gene>
<reference key="1">
    <citation type="journal article" date="2006" name="PLoS Genet.">
        <title>Genome sequence of Rickettsia bellii illuminates the role of amoebae in gene exchanges between intracellular pathogens.</title>
        <authorList>
            <person name="Ogata H."/>
            <person name="La Scola B."/>
            <person name="Audic S."/>
            <person name="Renesto P."/>
            <person name="Blanc G."/>
            <person name="Robert C."/>
            <person name="Fournier P.-E."/>
            <person name="Claverie J.-M."/>
            <person name="Raoult D."/>
        </authorList>
    </citation>
    <scope>NUCLEOTIDE SEQUENCE [LARGE SCALE GENOMIC DNA]</scope>
    <source>
        <strain>RML369-C</strain>
    </source>
</reference>
<proteinExistence type="inferred from homology"/>
<accession>Q1RKE4</accession>
<sequence length="196" mass="22205">MLSFHQLKFNIYQKQLFDNLSITFLDSAITYIKGANGCGKTSLLRMIAGIMQPSNGNIFYKNLNINNIAKPYCTYIGHNLGLKLEMTVFENLKFWSEIYNSVETLDAAIHYFKLYDLLDEKCYTLSSGLQKVVALARLIACQSDLWLLDEVETNLSKENRDLLNNLIVMKANSGGIVLLSSHTENHIKSAQILQLT</sequence>
<name>CCMA_RICBR</name>